<proteinExistence type="evidence at transcript level"/>
<dbReference type="EC" id="2.8.2.-"/>
<dbReference type="EMBL" id="AJ505990">
    <property type="protein sequence ID" value="CAD44529.1"/>
    <property type="molecule type" value="mRNA"/>
</dbReference>
<dbReference type="EMBL" id="AY575769">
    <property type="protein sequence ID" value="AAT80868.1"/>
    <property type="molecule type" value="mRNA"/>
</dbReference>
<dbReference type="EMBL" id="DQ812995">
    <property type="protein sequence ID" value="ABH11457.1"/>
    <property type="molecule type" value="mRNA"/>
</dbReference>
<dbReference type="EMBL" id="BC045453">
    <property type="protein sequence ID" value="AAH45453.1"/>
    <property type="molecule type" value="mRNA"/>
</dbReference>
<dbReference type="EMBL" id="BC065683">
    <property type="protein sequence ID" value="AAH65683.1"/>
    <property type="molecule type" value="mRNA"/>
</dbReference>
<dbReference type="RefSeq" id="NP_919402.2">
    <property type="nucleotide sequence ID" value="NM_194421.2"/>
</dbReference>
<dbReference type="SMR" id="Q800H9"/>
<dbReference type="FunCoup" id="Q800H9">
    <property type="interactions" value="775"/>
</dbReference>
<dbReference type="STRING" id="7955.ENSDARP00000022497"/>
<dbReference type="GlyCosmos" id="Q800H9">
    <property type="glycosylation" value="3 sites, No reported glycans"/>
</dbReference>
<dbReference type="PaxDb" id="7955-ENSDARP00000022497"/>
<dbReference type="Ensembl" id="ENSDART00000002250">
    <property type="protein sequence ID" value="ENSDARP00000022497"/>
    <property type="gene ID" value="ENSDARG00000012025"/>
</dbReference>
<dbReference type="GeneID" id="378450"/>
<dbReference type="KEGG" id="dre:378450"/>
<dbReference type="AGR" id="ZFIN:ZDB-GENE-030909-14"/>
<dbReference type="CTD" id="90161"/>
<dbReference type="ZFIN" id="ZDB-GENE-030909-14">
    <property type="gene designation" value="hs6st2"/>
</dbReference>
<dbReference type="eggNOG" id="KOG3955">
    <property type="taxonomic scope" value="Eukaryota"/>
</dbReference>
<dbReference type="HOGENOM" id="CLU_027877_1_0_1"/>
<dbReference type="InParanoid" id="Q800H9"/>
<dbReference type="OMA" id="HMCDGRL"/>
<dbReference type="OrthoDB" id="406981at2759"/>
<dbReference type="PhylomeDB" id="Q800H9"/>
<dbReference type="TreeFam" id="TF312835"/>
<dbReference type="Reactome" id="R-DRE-2022928">
    <property type="pathway name" value="HS-GAG biosynthesis"/>
</dbReference>
<dbReference type="PRO" id="PR:Q800H9"/>
<dbReference type="Proteomes" id="UP000000437">
    <property type="component" value="Chromosome 14"/>
</dbReference>
<dbReference type="Bgee" id="ENSDARG00000012025">
    <property type="expression patterns" value="Expressed in gastrula and 39 other cell types or tissues"/>
</dbReference>
<dbReference type="GO" id="GO:0016020">
    <property type="term" value="C:membrane"/>
    <property type="evidence" value="ECO:0007669"/>
    <property type="project" value="UniProtKB-SubCell"/>
</dbReference>
<dbReference type="GO" id="GO:0017095">
    <property type="term" value="F:heparan sulfate 6-sulfotransferase activity"/>
    <property type="evidence" value="ECO:0000315"/>
    <property type="project" value="ZFIN"/>
</dbReference>
<dbReference type="GO" id="GO:0001569">
    <property type="term" value="P:branching involved in blood vessel morphogenesis"/>
    <property type="evidence" value="ECO:0000315"/>
    <property type="project" value="ZFIN"/>
</dbReference>
<dbReference type="GO" id="GO:0030154">
    <property type="term" value="P:cell differentiation"/>
    <property type="evidence" value="ECO:0007669"/>
    <property type="project" value="UniProtKB-KW"/>
</dbReference>
<dbReference type="GO" id="GO:0048048">
    <property type="term" value="P:embryonic eye morphogenesis"/>
    <property type="evidence" value="ECO:0000315"/>
    <property type="project" value="ZFIN"/>
</dbReference>
<dbReference type="GO" id="GO:0007517">
    <property type="term" value="P:muscle organ development"/>
    <property type="evidence" value="ECO:0007669"/>
    <property type="project" value="UniProtKB-KW"/>
</dbReference>
<dbReference type="FunFam" id="3.40.50.300:FF:000852">
    <property type="entry name" value="Heparan-sulfate 6-O-sulfotransferase"/>
    <property type="match status" value="1"/>
</dbReference>
<dbReference type="FunFam" id="3.40.50.300:FF:001933">
    <property type="entry name" value="Heparan-sulfate 6-O-sulfotransferase"/>
    <property type="match status" value="1"/>
</dbReference>
<dbReference type="Gene3D" id="3.40.50.300">
    <property type="entry name" value="P-loop containing nucleotide triphosphate hydrolases"/>
    <property type="match status" value="1"/>
</dbReference>
<dbReference type="InterPro" id="IPR010635">
    <property type="entry name" value="Heparan_SO4-6-sulfoTrfase"/>
</dbReference>
<dbReference type="InterPro" id="IPR027417">
    <property type="entry name" value="P-loop_NTPase"/>
</dbReference>
<dbReference type="InterPro" id="IPR005331">
    <property type="entry name" value="Sulfotransferase"/>
</dbReference>
<dbReference type="PANTHER" id="PTHR12812">
    <property type="entry name" value="HEPARAN SULFATE 6-O-SULFOTRANSFERASE 3"/>
    <property type="match status" value="1"/>
</dbReference>
<dbReference type="PANTHER" id="PTHR12812:SF6">
    <property type="entry name" value="HEPARAN-SULFATE 6-O-SULFOTRANSFERASE 2"/>
    <property type="match status" value="1"/>
</dbReference>
<dbReference type="Pfam" id="PF03567">
    <property type="entry name" value="Sulfotransfer_2"/>
    <property type="match status" value="1"/>
</dbReference>
<dbReference type="SUPFAM" id="SSF52540">
    <property type="entry name" value="P-loop containing nucleoside triphosphate hydrolases"/>
    <property type="match status" value="1"/>
</dbReference>
<feature type="chain" id="PRO_0000190808" description="Heparan-sulfate 6-O-sulfotransferase 2">
    <location>
        <begin position="1"/>
        <end position="468"/>
    </location>
</feature>
<feature type="topological domain" description="Cytoplasmic" evidence="2">
    <location>
        <begin position="1"/>
        <end position="9"/>
    </location>
</feature>
<feature type="transmembrane region" description="Helical; Signal-anchor for type II membrane protein" evidence="2">
    <location>
        <begin position="10"/>
        <end position="30"/>
    </location>
</feature>
<feature type="topological domain" description="Lumenal" evidence="2">
    <location>
        <begin position="31"/>
        <end position="468"/>
    </location>
</feature>
<feature type="region of interest" description="Disordered" evidence="3">
    <location>
        <begin position="409"/>
        <end position="447"/>
    </location>
</feature>
<feature type="compositionally biased region" description="Basic and acidic residues" evidence="3">
    <location>
        <begin position="425"/>
        <end position="437"/>
    </location>
</feature>
<feature type="compositionally biased region" description="Acidic residues" evidence="3">
    <location>
        <begin position="438"/>
        <end position="447"/>
    </location>
</feature>
<feature type="active site" description="Proton acceptor" evidence="1">
    <location>
        <position position="160"/>
    </location>
</feature>
<feature type="binding site" evidence="1">
    <location>
        <begin position="103"/>
        <end position="111"/>
    </location>
    <ligand>
        <name>3'-phosphoadenylyl sulfate</name>
        <dbReference type="ChEBI" id="CHEBI:58339"/>
    </ligand>
</feature>
<feature type="binding site" evidence="1">
    <location>
        <begin position="133"/>
        <end position="134"/>
    </location>
    <ligand>
        <name>substrate</name>
    </ligand>
</feature>
<feature type="binding site" evidence="1">
    <location>
        <position position="150"/>
    </location>
    <ligand>
        <name>substrate</name>
    </ligand>
</feature>
<feature type="binding site" evidence="1">
    <location>
        <position position="155"/>
    </location>
    <ligand>
        <name>substrate</name>
    </ligand>
</feature>
<feature type="binding site" evidence="1">
    <location>
        <position position="160"/>
    </location>
    <ligand>
        <name>substrate</name>
    </ligand>
</feature>
<feature type="binding site" evidence="1">
    <location>
        <position position="197"/>
    </location>
    <ligand>
        <name>3'-phosphoadenylyl sulfate</name>
        <dbReference type="ChEBI" id="CHEBI:58339"/>
    </ligand>
</feature>
<feature type="binding site" evidence="1">
    <location>
        <position position="205"/>
    </location>
    <ligand>
        <name>3'-phosphoadenylyl sulfate</name>
        <dbReference type="ChEBI" id="CHEBI:58339"/>
    </ligand>
</feature>
<feature type="binding site" evidence="1">
    <location>
        <position position="209"/>
    </location>
    <ligand>
        <name>substrate</name>
    </ligand>
</feature>
<feature type="binding site" evidence="1">
    <location>
        <position position="216"/>
    </location>
    <ligand>
        <name>substrate</name>
    </ligand>
</feature>
<feature type="binding site" evidence="1">
    <location>
        <begin position="329"/>
        <end position="331"/>
    </location>
    <ligand>
        <name>3'-phosphoadenylyl sulfate</name>
        <dbReference type="ChEBI" id="CHEBI:58339"/>
    </ligand>
</feature>
<feature type="binding site" evidence="1">
    <location>
        <begin position="335"/>
        <end position="336"/>
    </location>
    <ligand>
        <name>3'-phosphoadenylyl sulfate</name>
        <dbReference type="ChEBI" id="CHEBI:58339"/>
    </ligand>
</feature>
<feature type="glycosylation site" description="N-linked (GlcNAc...) asparagine" evidence="2">
    <location>
        <position position="79"/>
    </location>
</feature>
<feature type="glycosylation site" description="N-linked (GlcNAc...) asparagine" evidence="2">
    <location>
        <position position="276"/>
    </location>
</feature>
<feature type="glycosylation site" description="N-linked (GlcNAc...) asparagine" evidence="2">
    <location>
        <position position="332"/>
    </location>
</feature>
<feature type="sequence conflict" description="In Ref. 4; AAH45453." evidence="7" ref="4">
    <original>K</original>
    <variation>R</variation>
    <location>
        <position position="106"/>
    </location>
</feature>
<feature type="sequence conflict" description="In Ref. 4; AAH45453." evidence="7" ref="4">
    <original>D</original>
    <variation>G</variation>
    <location>
        <position position="241"/>
    </location>
</feature>
<feature type="sequence conflict" description="In Ref. 1; CAD44529, 2; AAT80868 and 3; ABH11457." evidence="7" ref="1 2 3">
    <original>R</original>
    <variation>Q</variation>
    <location>
        <position position="434"/>
    </location>
</feature>
<feature type="sequence conflict" description="In Ref. 1; CAD44529, 2; AAT80868 and 3; ABH11457." evidence="7" ref="1 2 3">
    <original>L</original>
    <variation>S</variation>
    <location>
        <position position="461"/>
    </location>
</feature>
<reference key="1">
    <citation type="journal article" date="2003" name="J. Biol. Chem.">
        <title>Heparan sulfate 6-o-sulfotransferase is essential for muscle development in zebrafish.</title>
        <authorList>
            <person name="Bink R.J."/>
            <person name="Habuhi H."/>
            <person name="Lele Z."/>
            <person name="Dolk E."/>
            <person name="Joore J."/>
            <person name="Rauch G.-J."/>
            <person name="Geisler R."/>
            <person name="Wilson S.W."/>
            <person name="de Hertog J."/>
            <person name="Kimata K."/>
            <person name="Zivkovic D."/>
        </authorList>
    </citation>
    <scope>NUCLEOTIDE SEQUENCE [MRNA]</scope>
    <scope>FUNCTION</scope>
    <scope>TISSUE SPECIFICITY</scope>
    <scope>DISRUPTION PHENOTYPE</scope>
</reference>
<reference key="2">
    <citation type="journal article" date="2005" name="Dev. Biol.">
        <title>A unique role for 6-O sulfation modification in zebrafish vascular development.</title>
        <authorList>
            <person name="Chen E."/>
            <person name="Stringer S.E."/>
            <person name="Rusch M.A."/>
            <person name="Selleck S.B."/>
            <person name="Ekker S.C."/>
        </authorList>
    </citation>
    <scope>NUCLEOTIDE SEQUENCE [MRNA]</scope>
    <scope>FUNCTION</scope>
    <scope>DEVELOPMENTAL STAGE</scope>
    <scope>TISSUE SPECIFICITY</scope>
    <scope>DISRUPTION PHENOTYPE</scope>
</reference>
<reference key="3">
    <citation type="journal article" date="2006" name="Dev. Dyn.">
        <title>Combinatorial expression patterns of heparan sulfate sulfotransferases in zebrafish: II. The 6-O-sulfotransferase family.</title>
        <authorList>
            <person name="Cadwallader A.B."/>
            <person name="Yost H.J."/>
        </authorList>
    </citation>
    <scope>NUCLEOTIDE SEQUENCE [MRNA]</scope>
    <scope>DEVELOPMENTAL STAGE</scope>
    <scope>TISSUE SPECIFICITY</scope>
</reference>
<reference key="4">
    <citation type="submission" date="2004-01" db="EMBL/GenBank/DDBJ databases">
        <authorList>
            <consortium name="NIH - Zebrafish Gene Collection (ZGC) project"/>
        </authorList>
    </citation>
    <scope>NUCLEOTIDE SEQUENCE [LARGE SCALE MRNA]</scope>
    <source>
        <strain>AB</strain>
        <tissue>Embryo</tissue>
    </source>
</reference>
<comment type="function">
    <text evidence="4 5">6-O-sulfation enzyme which catalyzes the transfer of sulfate from 3'-phosphoadenosine 5'-phosphosulfate (PAPS) to position 6 of the N-sulfoglucosamine residue (GlcNS) of heparan sulfate. Required for muscle development and angiogenesis.</text>
</comment>
<comment type="catalytic activity">
    <reaction>
        <text>alpha-D-glucosaminyl-[heparan sulfate](n) + 3'-phosphoadenylyl sulfate = 6-sulfo-alpha-D-glucosaminyl-[heparan sulfate](n) + adenosine 3',5'-bisphosphate + H(+)</text>
        <dbReference type="Rhea" id="RHEA:56604"/>
        <dbReference type="Rhea" id="RHEA-COMP:9830"/>
        <dbReference type="Rhea" id="RHEA-COMP:14621"/>
        <dbReference type="ChEBI" id="CHEBI:15378"/>
        <dbReference type="ChEBI" id="CHEBI:58339"/>
        <dbReference type="ChEBI" id="CHEBI:58343"/>
        <dbReference type="ChEBI" id="CHEBI:58388"/>
        <dbReference type="ChEBI" id="CHEBI:140604"/>
    </reaction>
</comment>
<comment type="subcellular location">
    <subcellularLocation>
        <location evidence="7">Membrane</location>
        <topology evidence="7">Single-pass type II membrane protein</topology>
    </subcellularLocation>
</comment>
<comment type="tissue specificity">
    <text evidence="4 5 6">Expressed ubiquitously during gastrulation. During early somitogenesis, strong expression in head and presumptive brain. During mid-somitogenesis, strong expression in eye, hindbrain and somitic boundaries and weak expression in tail bud. During late somitogenesis, strong expression in eye, hindbrain, branchial arch primordia, spinal cord and ventral medial somites. At 24 hours post-fertilization (hpf), strong expression throughout the head, with expression receeding from the trunk spinal cord, ventral medial somites and somitic boundaries; expressed in cells surrounding vascular structures of the dorsal aorta and caudal vein in the tail. At 36 hpf, expressed in lens, optic stalk, hindbrain and pectoral fin. At 48 hpf, expressed in eye, brain, otic vesicle and branchial arches.</text>
</comment>
<comment type="developmental stage">
    <text evidence="5 6">Expressed both maternally and zygotically throughout the cleavage, gastrulation and somitogenesis stages.</text>
</comment>
<comment type="disruption phenotype">
    <text evidence="4 5">Morpholino knockdown results in defects in the branching morphogenesis of the caudal vein and defects in somite specification with impaired muscle differentiation.</text>
</comment>
<comment type="similarity">
    <text evidence="7">Belongs to the sulfotransferase 6 family.</text>
</comment>
<accession>Q800H9</accession>
<accession>A0MGZ6</accession>
<accession>Q6P0B4</accession>
<accession>Q7ZVQ5</accession>
<protein>
    <recommendedName>
        <fullName>Heparan-sulfate 6-O-sulfotransferase 2</fullName>
        <shortName>HS 6-OST-2</shortName>
        <shortName>HS6ST-2</shortName>
        <ecNumber>2.8.2.-</ecNumber>
    </recommendedName>
</protein>
<organism>
    <name type="scientific">Danio rerio</name>
    <name type="common">Zebrafish</name>
    <name type="synonym">Brachydanio rerio</name>
    <dbReference type="NCBI Taxonomy" id="7955"/>
    <lineage>
        <taxon>Eukaryota</taxon>
        <taxon>Metazoa</taxon>
        <taxon>Chordata</taxon>
        <taxon>Craniata</taxon>
        <taxon>Vertebrata</taxon>
        <taxon>Euteleostomi</taxon>
        <taxon>Actinopterygii</taxon>
        <taxon>Neopterygii</taxon>
        <taxon>Teleostei</taxon>
        <taxon>Ostariophysi</taxon>
        <taxon>Cypriniformes</taxon>
        <taxon>Danionidae</taxon>
        <taxon>Danioninae</taxon>
        <taxon>Danio</taxon>
    </lineage>
</organism>
<name>H6ST2_DANRE</name>
<sequence length="468" mass="54605">MDGKSNYSRLLIALLMILFFGGIVLQYICSTSDWQLLHLASLSSRLGSRAPGDRLNGAGAGDPYSSEDGALVRFVPRFNFTTKDLSRAVDFHIKGDDVIVFLHIQKTGGTTFGRHLVRNIQLERPCECHAGQKKCTCYRPGKRDTWLFSRFSTGWSCGLHADWTELTNCVPSFMSNRESQERRMTPSRNYYYITILRDPVWRYLSEWRHVQRGATWKASKHMCDGRLPTLTELPSCYPGDDWSGCSLEEFMVCPYNLANNRQTRMLADLSLVGCYNLTVMSENQRWAMLLESAKRNLRNMAFFGLTEYQRKTQYLFEHTFRLSFIAPFTQLNGTRAASVEVEPETQRRIRELNQWDVELYEYARDLFLQRFQFARQQERREARQRRIQERRKLRAKVKSWLGVTGKAVFKPTKEPPMTEQSPAFAEEKQADAERTLESETEGQVEENWLEEDDGEIMLDYLENVEQWR</sequence>
<evidence type="ECO:0000250" key="1">
    <source>
        <dbReference type="UniProtKB" id="A0MGZ7"/>
    </source>
</evidence>
<evidence type="ECO:0000255" key="2"/>
<evidence type="ECO:0000256" key="3">
    <source>
        <dbReference type="SAM" id="MobiDB-lite"/>
    </source>
</evidence>
<evidence type="ECO:0000269" key="4">
    <source>
    </source>
</evidence>
<evidence type="ECO:0000269" key="5">
    <source>
    </source>
</evidence>
<evidence type="ECO:0000269" key="6">
    <source>
    </source>
</evidence>
<evidence type="ECO:0000305" key="7"/>
<keyword id="KW-0037">Angiogenesis</keyword>
<keyword id="KW-0217">Developmental protein</keyword>
<keyword id="KW-0221">Differentiation</keyword>
<keyword id="KW-0325">Glycoprotein</keyword>
<keyword id="KW-0472">Membrane</keyword>
<keyword id="KW-0517">Myogenesis</keyword>
<keyword id="KW-1185">Reference proteome</keyword>
<keyword id="KW-0735">Signal-anchor</keyword>
<keyword id="KW-0808">Transferase</keyword>
<keyword id="KW-0812">Transmembrane</keyword>
<keyword id="KW-1133">Transmembrane helix</keyword>
<gene>
    <name type="primary">hs6st2</name>
    <name type="synonym">hs6st</name>
</gene>